<reference key="1">
    <citation type="journal article" date="2009" name="Environ. Microbiol.">
        <title>The genome of Polaromonas naphthalenivorans strain CJ2, isolated from coal tar-contaminated sediment, reveals physiological and metabolic versatility and evolution through extensive horizontal gene transfer.</title>
        <authorList>
            <person name="Yagi J.M."/>
            <person name="Sims D."/>
            <person name="Brettin T."/>
            <person name="Bruce D."/>
            <person name="Madsen E.L."/>
        </authorList>
    </citation>
    <scope>NUCLEOTIDE SEQUENCE [LARGE SCALE GENOMIC DNA]</scope>
    <source>
        <strain>CJ2</strain>
    </source>
</reference>
<comment type="cofactor">
    <cofactor evidence="1">
        <name>Zn(2+)</name>
        <dbReference type="ChEBI" id="CHEBI:29105"/>
    </cofactor>
    <text evidence="1">Binds 1 zinc ion per subunit.</text>
</comment>
<comment type="subcellular location">
    <subcellularLocation>
        <location evidence="1">Cell inner membrane</location>
        <topology evidence="1">Multi-pass membrane protein</topology>
    </subcellularLocation>
</comment>
<comment type="similarity">
    <text evidence="1">Belongs to the peptidase M48B family.</text>
</comment>
<name>HTPX_POLNA</name>
<dbReference type="EC" id="3.4.24.-" evidence="1"/>
<dbReference type="EMBL" id="CP000529">
    <property type="protein sequence ID" value="ABM38745.1"/>
    <property type="molecule type" value="Genomic_DNA"/>
</dbReference>
<dbReference type="RefSeq" id="WP_011802816.1">
    <property type="nucleotide sequence ID" value="NC_008781.1"/>
</dbReference>
<dbReference type="SMR" id="A1VSW7"/>
<dbReference type="STRING" id="365044.Pnap_3448"/>
<dbReference type="MEROPS" id="M48.002"/>
<dbReference type="KEGG" id="pna:Pnap_3448"/>
<dbReference type="eggNOG" id="COG0501">
    <property type="taxonomic scope" value="Bacteria"/>
</dbReference>
<dbReference type="HOGENOM" id="CLU_042266_1_0_4"/>
<dbReference type="OrthoDB" id="15218at2"/>
<dbReference type="Proteomes" id="UP000000644">
    <property type="component" value="Chromosome"/>
</dbReference>
<dbReference type="GO" id="GO:0005886">
    <property type="term" value="C:plasma membrane"/>
    <property type="evidence" value="ECO:0007669"/>
    <property type="project" value="UniProtKB-SubCell"/>
</dbReference>
<dbReference type="GO" id="GO:0004222">
    <property type="term" value="F:metalloendopeptidase activity"/>
    <property type="evidence" value="ECO:0007669"/>
    <property type="project" value="UniProtKB-UniRule"/>
</dbReference>
<dbReference type="GO" id="GO:0008270">
    <property type="term" value="F:zinc ion binding"/>
    <property type="evidence" value="ECO:0007669"/>
    <property type="project" value="UniProtKB-UniRule"/>
</dbReference>
<dbReference type="GO" id="GO:0006508">
    <property type="term" value="P:proteolysis"/>
    <property type="evidence" value="ECO:0007669"/>
    <property type="project" value="UniProtKB-KW"/>
</dbReference>
<dbReference type="CDD" id="cd07335">
    <property type="entry name" value="M48B_HtpX_like"/>
    <property type="match status" value="1"/>
</dbReference>
<dbReference type="Gene3D" id="3.30.2010.10">
    <property type="entry name" value="Metalloproteases ('zincins'), catalytic domain"/>
    <property type="match status" value="1"/>
</dbReference>
<dbReference type="HAMAP" id="MF_00188">
    <property type="entry name" value="Pept_M48_protease_HtpX"/>
    <property type="match status" value="1"/>
</dbReference>
<dbReference type="InterPro" id="IPR050083">
    <property type="entry name" value="HtpX_protease"/>
</dbReference>
<dbReference type="InterPro" id="IPR022919">
    <property type="entry name" value="Pept_M48_protease_HtpX"/>
</dbReference>
<dbReference type="InterPro" id="IPR001915">
    <property type="entry name" value="Peptidase_M48"/>
</dbReference>
<dbReference type="NCBIfam" id="NF003965">
    <property type="entry name" value="PRK05457.1"/>
    <property type="match status" value="1"/>
</dbReference>
<dbReference type="PANTHER" id="PTHR43221">
    <property type="entry name" value="PROTEASE HTPX"/>
    <property type="match status" value="1"/>
</dbReference>
<dbReference type="PANTHER" id="PTHR43221:SF1">
    <property type="entry name" value="PROTEASE HTPX"/>
    <property type="match status" value="1"/>
</dbReference>
<dbReference type="Pfam" id="PF01435">
    <property type="entry name" value="Peptidase_M48"/>
    <property type="match status" value="1"/>
</dbReference>
<evidence type="ECO:0000255" key="1">
    <source>
        <dbReference type="HAMAP-Rule" id="MF_00188"/>
    </source>
</evidence>
<gene>
    <name evidence="1" type="primary">htpX</name>
    <name type="ordered locus">Pnap_3448</name>
</gene>
<feature type="chain" id="PRO_1000020909" description="Protease HtpX homolog">
    <location>
        <begin position="1"/>
        <end position="291"/>
    </location>
</feature>
<feature type="transmembrane region" description="Helical" evidence="1">
    <location>
        <begin position="4"/>
        <end position="24"/>
    </location>
</feature>
<feature type="transmembrane region" description="Helical" evidence="1">
    <location>
        <begin position="39"/>
        <end position="59"/>
    </location>
</feature>
<feature type="transmembrane region" description="Helical" evidence="1">
    <location>
        <begin position="159"/>
        <end position="179"/>
    </location>
</feature>
<feature type="transmembrane region" description="Helical" evidence="1">
    <location>
        <begin position="199"/>
        <end position="219"/>
    </location>
</feature>
<feature type="active site" evidence="1">
    <location>
        <position position="145"/>
    </location>
</feature>
<feature type="binding site" evidence="1">
    <location>
        <position position="144"/>
    </location>
    <ligand>
        <name>Zn(2+)</name>
        <dbReference type="ChEBI" id="CHEBI:29105"/>
        <note>catalytic</note>
    </ligand>
</feature>
<feature type="binding site" evidence="1">
    <location>
        <position position="148"/>
    </location>
    <ligand>
        <name>Zn(2+)</name>
        <dbReference type="ChEBI" id="CHEBI:29105"/>
        <note>catalytic</note>
    </ligand>
</feature>
<feature type="binding site" evidence="1">
    <location>
        <position position="224"/>
    </location>
    <ligand>
        <name>Zn(2+)</name>
        <dbReference type="ChEBI" id="CHEBI:29105"/>
        <note>catalytic</note>
    </ligand>
</feature>
<accession>A1VSW7</accession>
<protein>
    <recommendedName>
        <fullName evidence="1">Protease HtpX homolog</fullName>
        <ecNumber evidence="1">3.4.24.-</ecNumber>
    </recommendedName>
</protein>
<sequence length="291" mass="30747">MKRILLFILTNVAVVAVLGIVASLLGVNRFLTANGLNLSALLGFALIMGFGGAIISLLISKPVAKWSAGVRLINDPQNADEAWIVETVRRLADKAQIGMPEVGIFEGEPNAFATGAFKNSSLVAVSTGLLQGMTKEEIEAVLGHEIAHVANGDMVTMTLIQGVMNTFVVFLSRVIGYAVDSFLRKGDSNSSGPGIGYYVSTIVLDIVLGFAAAIVVAWFSRHREFRADAGAAQLMGRKQPMMNALARLGGMQPGELPKAVEAMGITGSIGKLFATHPPIEERIAALQNAQG</sequence>
<keyword id="KW-0997">Cell inner membrane</keyword>
<keyword id="KW-1003">Cell membrane</keyword>
<keyword id="KW-0378">Hydrolase</keyword>
<keyword id="KW-0472">Membrane</keyword>
<keyword id="KW-0479">Metal-binding</keyword>
<keyword id="KW-0482">Metalloprotease</keyword>
<keyword id="KW-0645">Protease</keyword>
<keyword id="KW-1185">Reference proteome</keyword>
<keyword id="KW-0812">Transmembrane</keyword>
<keyword id="KW-1133">Transmembrane helix</keyword>
<keyword id="KW-0862">Zinc</keyword>
<organism>
    <name type="scientific">Polaromonas naphthalenivorans (strain CJ2)</name>
    <dbReference type="NCBI Taxonomy" id="365044"/>
    <lineage>
        <taxon>Bacteria</taxon>
        <taxon>Pseudomonadati</taxon>
        <taxon>Pseudomonadota</taxon>
        <taxon>Betaproteobacteria</taxon>
        <taxon>Burkholderiales</taxon>
        <taxon>Comamonadaceae</taxon>
        <taxon>Polaromonas</taxon>
    </lineage>
</organism>
<proteinExistence type="inferred from homology"/>